<name>MNMA1_THEPX</name>
<reference key="1">
    <citation type="submission" date="2008-01" db="EMBL/GenBank/DDBJ databases">
        <title>Complete sequence of Thermoanaerobacter sp. X514.</title>
        <authorList>
            <consortium name="US DOE Joint Genome Institute"/>
            <person name="Copeland A."/>
            <person name="Lucas S."/>
            <person name="Lapidus A."/>
            <person name="Barry K."/>
            <person name="Glavina del Rio T."/>
            <person name="Dalin E."/>
            <person name="Tice H."/>
            <person name="Pitluck S."/>
            <person name="Bruce D."/>
            <person name="Goodwin L."/>
            <person name="Saunders E."/>
            <person name="Brettin T."/>
            <person name="Detter J.C."/>
            <person name="Han C."/>
            <person name="Schmutz J."/>
            <person name="Larimer F."/>
            <person name="Land M."/>
            <person name="Hauser L."/>
            <person name="Kyrpides N."/>
            <person name="Kim E."/>
            <person name="Hemme C."/>
            <person name="Fields M.W."/>
            <person name="He Z."/>
            <person name="Zhou J."/>
            <person name="Richardson P."/>
        </authorList>
    </citation>
    <scope>NUCLEOTIDE SEQUENCE [LARGE SCALE GENOMIC DNA]</scope>
    <source>
        <strain>X514</strain>
    </source>
</reference>
<feature type="chain" id="PRO_0000349840" description="tRNA-specific 2-thiouridylase MnmA 1">
    <location>
        <begin position="1"/>
        <end position="364"/>
    </location>
</feature>
<feature type="region of interest" description="Interaction with tRNA" evidence="1">
    <location>
        <begin position="154"/>
        <end position="156"/>
    </location>
</feature>
<feature type="region of interest" description="Interaction with tRNA" evidence="1">
    <location>
        <begin position="310"/>
        <end position="311"/>
    </location>
</feature>
<feature type="active site" description="Nucleophile" evidence="1">
    <location>
        <position position="106"/>
    </location>
</feature>
<feature type="active site" description="Cysteine persulfide intermediate" evidence="1">
    <location>
        <position position="204"/>
    </location>
</feature>
<feature type="binding site" evidence="1">
    <location>
        <begin position="10"/>
        <end position="17"/>
    </location>
    <ligand>
        <name>ATP</name>
        <dbReference type="ChEBI" id="CHEBI:30616"/>
    </ligand>
</feature>
<feature type="binding site" evidence="1">
    <location>
        <position position="36"/>
    </location>
    <ligand>
        <name>ATP</name>
        <dbReference type="ChEBI" id="CHEBI:30616"/>
    </ligand>
</feature>
<feature type="binding site" evidence="1">
    <location>
        <position position="130"/>
    </location>
    <ligand>
        <name>ATP</name>
        <dbReference type="ChEBI" id="CHEBI:30616"/>
    </ligand>
</feature>
<feature type="site" description="Interaction with tRNA" evidence="1">
    <location>
        <position position="131"/>
    </location>
</feature>
<feature type="site" description="Interaction with tRNA" evidence="1">
    <location>
        <position position="343"/>
    </location>
</feature>
<feature type="disulfide bond" description="Alternate" evidence="1">
    <location>
        <begin position="106"/>
        <end position="204"/>
    </location>
</feature>
<evidence type="ECO:0000255" key="1">
    <source>
        <dbReference type="HAMAP-Rule" id="MF_00144"/>
    </source>
</evidence>
<evidence type="ECO:0000305" key="2"/>
<sequence length="364" mass="41540">MKKNNRVVVGMSGGVDSSVSAYLLKEQGFDVIGVTMQIWQDKDEEAVRVEGGCCSLSAVNDARRVANKIGIKYYVMNFKDVFKEKVIDYFVDEYLRGRTPNPCIACNKYIKFEELLKRAWMIDAYYVATGHYAVKEYDEERGRYLLKKSVDTSKDQTYVLYNLTQTQLEHILFPLGKYKKDEVRELAKNLGLPVASKPDSQEICFVTDNDYGKFIRENAKEEIKPGEFRDTRGRFLGYHKGIIHYTIGQRKGLGISVGKPLYVVDIDAENNVVVLGYGDEVFGDELISYNNNFISIDKLEREMRVKAKIRYNAKEQDAVIRPLEDGKVFVKFDNPQRAITPGQSVVFYDGDIVVGGGTIERKVR</sequence>
<gene>
    <name evidence="1" type="primary">mnmA1</name>
    <name type="ordered locus">Teth514_0773</name>
</gene>
<keyword id="KW-0067">ATP-binding</keyword>
<keyword id="KW-0963">Cytoplasm</keyword>
<keyword id="KW-1015">Disulfide bond</keyword>
<keyword id="KW-0547">Nucleotide-binding</keyword>
<keyword id="KW-0694">RNA-binding</keyword>
<keyword id="KW-0808">Transferase</keyword>
<keyword id="KW-0819">tRNA processing</keyword>
<keyword id="KW-0820">tRNA-binding</keyword>
<accession>B0K584</accession>
<proteinExistence type="inferred from homology"/>
<protein>
    <recommendedName>
        <fullName evidence="1">tRNA-specific 2-thiouridylase MnmA 1</fullName>
        <ecNumber evidence="1">2.8.1.13</ecNumber>
    </recommendedName>
</protein>
<comment type="function">
    <text evidence="1">Catalyzes the 2-thiolation of uridine at the wobble position (U34) of tRNA, leading to the formation of s(2)U34.</text>
</comment>
<comment type="catalytic activity">
    <reaction evidence="1">
        <text>S-sulfanyl-L-cysteinyl-[protein] + uridine(34) in tRNA + AH2 + ATP = 2-thiouridine(34) in tRNA + L-cysteinyl-[protein] + A + AMP + diphosphate + H(+)</text>
        <dbReference type="Rhea" id="RHEA:47032"/>
        <dbReference type="Rhea" id="RHEA-COMP:10131"/>
        <dbReference type="Rhea" id="RHEA-COMP:11726"/>
        <dbReference type="Rhea" id="RHEA-COMP:11727"/>
        <dbReference type="Rhea" id="RHEA-COMP:11728"/>
        <dbReference type="ChEBI" id="CHEBI:13193"/>
        <dbReference type="ChEBI" id="CHEBI:15378"/>
        <dbReference type="ChEBI" id="CHEBI:17499"/>
        <dbReference type="ChEBI" id="CHEBI:29950"/>
        <dbReference type="ChEBI" id="CHEBI:30616"/>
        <dbReference type="ChEBI" id="CHEBI:33019"/>
        <dbReference type="ChEBI" id="CHEBI:61963"/>
        <dbReference type="ChEBI" id="CHEBI:65315"/>
        <dbReference type="ChEBI" id="CHEBI:87170"/>
        <dbReference type="ChEBI" id="CHEBI:456215"/>
        <dbReference type="EC" id="2.8.1.13"/>
    </reaction>
</comment>
<comment type="subcellular location">
    <subcellularLocation>
        <location evidence="1">Cytoplasm</location>
    </subcellularLocation>
</comment>
<comment type="similarity">
    <text evidence="1">Belongs to the MnmA/TRMU family.</text>
</comment>
<comment type="sequence caution" evidence="2">
    <conflict type="erroneous initiation">
        <sequence resource="EMBL-CDS" id="ABY92077"/>
    </conflict>
</comment>
<organism>
    <name type="scientific">Thermoanaerobacter sp. (strain X514)</name>
    <dbReference type="NCBI Taxonomy" id="399726"/>
    <lineage>
        <taxon>Bacteria</taxon>
        <taxon>Bacillati</taxon>
        <taxon>Bacillota</taxon>
        <taxon>Clostridia</taxon>
        <taxon>Thermoanaerobacterales</taxon>
        <taxon>Thermoanaerobacteraceae</taxon>
        <taxon>Thermoanaerobacter</taxon>
    </lineage>
</organism>
<dbReference type="EC" id="2.8.1.13" evidence="1"/>
<dbReference type="EMBL" id="CP000923">
    <property type="protein sequence ID" value="ABY92077.1"/>
    <property type="status" value="ALT_INIT"/>
    <property type="molecule type" value="Genomic_DNA"/>
</dbReference>
<dbReference type="RefSeq" id="WP_038016936.1">
    <property type="nucleotide sequence ID" value="NC_010320.1"/>
</dbReference>
<dbReference type="SMR" id="B0K584"/>
<dbReference type="KEGG" id="tex:Teth514_0773"/>
<dbReference type="HOGENOM" id="CLU_035188_0_0_9"/>
<dbReference type="Proteomes" id="UP000002155">
    <property type="component" value="Chromosome"/>
</dbReference>
<dbReference type="GO" id="GO:0005737">
    <property type="term" value="C:cytoplasm"/>
    <property type="evidence" value="ECO:0007669"/>
    <property type="project" value="UniProtKB-SubCell"/>
</dbReference>
<dbReference type="GO" id="GO:0005524">
    <property type="term" value="F:ATP binding"/>
    <property type="evidence" value="ECO:0007669"/>
    <property type="project" value="UniProtKB-KW"/>
</dbReference>
<dbReference type="GO" id="GO:0000049">
    <property type="term" value="F:tRNA binding"/>
    <property type="evidence" value="ECO:0007669"/>
    <property type="project" value="UniProtKB-KW"/>
</dbReference>
<dbReference type="GO" id="GO:0103016">
    <property type="term" value="F:tRNA-uridine 2-sulfurtransferase activity"/>
    <property type="evidence" value="ECO:0007669"/>
    <property type="project" value="UniProtKB-EC"/>
</dbReference>
<dbReference type="GO" id="GO:0002143">
    <property type="term" value="P:tRNA wobble position uridine thiolation"/>
    <property type="evidence" value="ECO:0007669"/>
    <property type="project" value="TreeGrafter"/>
</dbReference>
<dbReference type="CDD" id="cd01998">
    <property type="entry name" value="MnmA_TRMU-like"/>
    <property type="match status" value="1"/>
</dbReference>
<dbReference type="FunFam" id="2.30.30.280:FF:000001">
    <property type="entry name" value="tRNA-specific 2-thiouridylase MnmA"/>
    <property type="match status" value="1"/>
</dbReference>
<dbReference type="FunFam" id="2.40.30.10:FF:000023">
    <property type="entry name" value="tRNA-specific 2-thiouridylase MnmA"/>
    <property type="match status" value="1"/>
</dbReference>
<dbReference type="FunFam" id="3.40.50.620:FF:000115">
    <property type="entry name" value="tRNA-specific 2-thiouridylase MnmA"/>
    <property type="match status" value="1"/>
</dbReference>
<dbReference type="Gene3D" id="2.30.30.280">
    <property type="entry name" value="Adenine nucleotide alpha hydrolases-like domains"/>
    <property type="match status" value="1"/>
</dbReference>
<dbReference type="Gene3D" id="3.40.50.620">
    <property type="entry name" value="HUPs"/>
    <property type="match status" value="1"/>
</dbReference>
<dbReference type="Gene3D" id="2.40.30.10">
    <property type="entry name" value="Translation factors"/>
    <property type="match status" value="1"/>
</dbReference>
<dbReference type="HAMAP" id="MF_00144">
    <property type="entry name" value="tRNA_thiouridyl_MnmA"/>
    <property type="match status" value="1"/>
</dbReference>
<dbReference type="InterPro" id="IPR004506">
    <property type="entry name" value="MnmA-like"/>
</dbReference>
<dbReference type="InterPro" id="IPR046885">
    <property type="entry name" value="MnmA-like_C"/>
</dbReference>
<dbReference type="InterPro" id="IPR046884">
    <property type="entry name" value="MnmA-like_central"/>
</dbReference>
<dbReference type="InterPro" id="IPR023382">
    <property type="entry name" value="MnmA-like_central_sf"/>
</dbReference>
<dbReference type="InterPro" id="IPR014729">
    <property type="entry name" value="Rossmann-like_a/b/a_fold"/>
</dbReference>
<dbReference type="NCBIfam" id="NF001138">
    <property type="entry name" value="PRK00143.1"/>
    <property type="match status" value="1"/>
</dbReference>
<dbReference type="NCBIfam" id="TIGR00420">
    <property type="entry name" value="trmU"/>
    <property type="match status" value="1"/>
</dbReference>
<dbReference type="PANTHER" id="PTHR11933:SF5">
    <property type="entry name" value="MITOCHONDRIAL TRNA-SPECIFIC 2-THIOURIDYLASE 1"/>
    <property type="match status" value="1"/>
</dbReference>
<dbReference type="PANTHER" id="PTHR11933">
    <property type="entry name" value="TRNA 5-METHYLAMINOMETHYL-2-THIOURIDYLATE -METHYLTRANSFERASE"/>
    <property type="match status" value="1"/>
</dbReference>
<dbReference type="Pfam" id="PF03054">
    <property type="entry name" value="tRNA_Me_trans"/>
    <property type="match status" value="1"/>
</dbReference>
<dbReference type="Pfam" id="PF20258">
    <property type="entry name" value="tRNA_Me_trans_C"/>
    <property type="match status" value="1"/>
</dbReference>
<dbReference type="Pfam" id="PF20259">
    <property type="entry name" value="tRNA_Me_trans_M"/>
    <property type="match status" value="1"/>
</dbReference>
<dbReference type="SUPFAM" id="SSF52402">
    <property type="entry name" value="Adenine nucleotide alpha hydrolases-like"/>
    <property type="match status" value="1"/>
</dbReference>